<keyword id="KW-0378">Hydrolase</keyword>
<keyword id="KW-1185">Reference proteome</keyword>
<gene>
    <name evidence="1" type="primary">apaH</name>
    <name type="ordered locus">ECA3861</name>
</gene>
<evidence type="ECO:0000255" key="1">
    <source>
        <dbReference type="HAMAP-Rule" id="MF_00199"/>
    </source>
</evidence>
<name>APAH_PECAS</name>
<proteinExistence type="inferred from homology"/>
<organism>
    <name type="scientific">Pectobacterium atrosepticum (strain SCRI 1043 / ATCC BAA-672)</name>
    <name type="common">Erwinia carotovora subsp. atroseptica</name>
    <dbReference type="NCBI Taxonomy" id="218491"/>
    <lineage>
        <taxon>Bacteria</taxon>
        <taxon>Pseudomonadati</taxon>
        <taxon>Pseudomonadota</taxon>
        <taxon>Gammaproteobacteria</taxon>
        <taxon>Enterobacterales</taxon>
        <taxon>Pectobacteriaceae</taxon>
        <taxon>Pectobacterium</taxon>
    </lineage>
</organism>
<sequence length="281" mass="31320">MSTYLVGDVHGCLVELKALLAQVSFNPEQDTLWLTGDLVARGPDSLQVLRFVRSLGSSVRMVLGNHDLHLLAVYAGISRNKPKDRLNDLLTAPDADELINWLRRQPILQVDEDLKLVMAHAGITPQWDLPTALVCAREVESILSSDSYPLFLDAMYGDMPNHWSPELSGLARLRFSTNVFTRMRYCFSGGQLDMLCKEQPGQAPSLLKPWFDLPSQVAGEYAIAFGHWASLEGKGTPENIYALDTGCCWGGELTMLRWDDKRYFTQPSLSSNTELSGDITL</sequence>
<accession>Q6D0D8</accession>
<feature type="chain" id="PRO_0000197991" description="Bis(5'-nucleosyl)-tetraphosphatase, symmetrical">
    <location>
        <begin position="1"/>
        <end position="281"/>
    </location>
</feature>
<dbReference type="EC" id="3.6.1.41" evidence="1"/>
<dbReference type="EMBL" id="BX950851">
    <property type="protein sequence ID" value="CAG76759.1"/>
    <property type="molecule type" value="Genomic_DNA"/>
</dbReference>
<dbReference type="RefSeq" id="WP_011095359.1">
    <property type="nucleotide sequence ID" value="NC_004547.2"/>
</dbReference>
<dbReference type="SMR" id="Q6D0D8"/>
<dbReference type="STRING" id="218491.ECA3861"/>
<dbReference type="KEGG" id="eca:ECA3861"/>
<dbReference type="PATRIC" id="fig|218491.5.peg.3916"/>
<dbReference type="eggNOG" id="COG0639">
    <property type="taxonomic scope" value="Bacteria"/>
</dbReference>
<dbReference type="HOGENOM" id="CLU_056184_2_0_6"/>
<dbReference type="OrthoDB" id="9807890at2"/>
<dbReference type="Proteomes" id="UP000007966">
    <property type="component" value="Chromosome"/>
</dbReference>
<dbReference type="GO" id="GO:0008803">
    <property type="term" value="F:bis(5'-nucleosyl)-tetraphosphatase (symmetrical) activity"/>
    <property type="evidence" value="ECO:0007669"/>
    <property type="project" value="UniProtKB-UniRule"/>
</dbReference>
<dbReference type="CDD" id="cd07422">
    <property type="entry name" value="MPP_ApaH"/>
    <property type="match status" value="1"/>
</dbReference>
<dbReference type="FunFam" id="3.60.21.10:FF:000013">
    <property type="entry name" value="Bis(5'-nucleosyl)-tetraphosphatase, symmetrical"/>
    <property type="match status" value="1"/>
</dbReference>
<dbReference type="Gene3D" id="3.60.21.10">
    <property type="match status" value="1"/>
</dbReference>
<dbReference type="HAMAP" id="MF_00199">
    <property type="entry name" value="ApaH"/>
    <property type="match status" value="1"/>
</dbReference>
<dbReference type="InterPro" id="IPR004617">
    <property type="entry name" value="ApaH"/>
</dbReference>
<dbReference type="InterPro" id="IPR004843">
    <property type="entry name" value="Calcineurin-like_PHP_ApaH"/>
</dbReference>
<dbReference type="InterPro" id="IPR029052">
    <property type="entry name" value="Metallo-depent_PP-like"/>
</dbReference>
<dbReference type="NCBIfam" id="TIGR00668">
    <property type="entry name" value="apaH"/>
    <property type="match status" value="1"/>
</dbReference>
<dbReference type="NCBIfam" id="NF001204">
    <property type="entry name" value="PRK00166.1"/>
    <property type="match status" value="1"/>
</dbReference>
<dbReference type="PANTHER" id="PTHR40942">
    <property type="match status" value="1"/>
</dbReference>
<dbReference type="PANTHER" id="PTHR40942:SF4">
    <property type="entry name" value="CYTOCHROME C5"/>
    <property type="match status" value="1"/>
</dbReference>
<dbReference type="Pfam" id="PF00149">
    <property type="entry name" value="Metallophos"/>
    <property type="match status" value="1"/>
</dbReference>
<dbReference type="PIRSF" id="PIRSF000903">
    <property type="entry name" value="B5n-ttraPtase_sm"/>
    <property type="match status" value="1"/>
</dbReference>
<dbReference type="SUPFAM" id="SSF56300">
    <property type="entry name" value="Metallo-dependent phosphatases"/>
    <property type="match status" value="1"/>
</dbReference>
<protein>
    <recommendedName>
        <fullName evidence="1">Bis(5'-nucleosyl)-tetraphosphatase, symmetrical</fullName>
        <ecNumber evidence="1">3.6.1.41</ecNumber>
    </recommendedName>
    <alternativeName>
        <fullName evidence="1">Ap4A hydrolase</fullName>
    </alternativeName>
    <alternativeName>
        <fullName evidence="1">Diadenosine 5',5'''-P1,P4-tetraphosphate pyrophosphohydrolase</fullName>
    </alternativeName>
    <alternativeName>
        <fullName evidence="1">Diadenosine tetraphosphatase</fullName>
    </alternativeName>
</protein>
<comment type="function">
    <text evidence="1">Hydrolyzes diadenosine 5',5'''-P1,P4-tetraphosphate to yield ADP.</text>
</comment>
<comment type="catalytic activity">
    <reaction evidence="1">
        <text>P(1),P(4)-bis(5'-adenosyl) tetraphosphate + H2O = 2 ADP + 2 H(+)</text>
        <dbReference type="Rhea" id="RHEA:24252"/>
        <dbReference type="ChEBI" id="CHEBI:15377"/>
        <dbReference type="ChEBI" id="CHEBI:15378"/>
        <dbReference type="ChEBI" id="CHEBI:58141"/>
        <dbReference type="ChEBI" id="CHEBI:456216"/>
        <dbReference type="EC" id="3.6.1.41"/>
    </reaction>
</comment>
<comment type="similarity">
    <text evidence="1">Belongs to the Ap4A hydrolase family.</text>
</comment>
<reference key="1">
    <citation type="journal article" date="2004" name="Proc. Natl. Acad. Sci. U.S.A.">
        <title>Genome sequence of the enterobacterial phytopathogen Erwinia carotovora subsp. atroseptica and characterization of virulence factors.</title>
        <authorList>
            <person name="Bell K.S."/>
            <person name="Sebaihia M."/>
            <person name="Pritchard L."/>
            <person name="Holden M.T.G."/>
            <person name="Hyman L.J."/>
            <person name="Holeva M.C."/>
            <person name="Thomson N.R."/>
            <person name="Bentley S.D."/>
            <person name="Churcher L.J.C."/>
            <person name="Mungall K."/>
            <person name="Atkin R."/>
            <person name="Bason N."/>
            <person name="Brooks K."/>
            <person name="Chillingworth T."/>
            <person name="Clark K."/>
            <person name="Doggett J."/>
            <person name="Fraser A."/>
            <person name="Hance Z."/>
            <person name="Hauser H."/>
            <person name="Jagels K."/>
            <person name="Moule S."/>
            <person name="Norbertczak H."/>
            <person name="Ormond D."/>
            <person name="Price C."/>
            <person name="Quail M.A."/>
            <person name="Sanders M."/>
            <person name="Walker D."/>
            <person name="Whitehead S."/>
            <person name="Salmond G.P.C."/>
            <person name="Birch P.R.J."/>
            <person name="Parkhill J."/>
            <person name="Toth I.K."/>
        </authorList>
    </citation>
    <scope>NUCLEOTIDE SEQUENCE [LARGE SCALE GENOMIC DNA]</scope>
    <source>
        <strain>SCRI 1043 / ATCC BAA-672</strain>
    </source>
</reference>